<proteinExistence type="inferred from homology"/>
<sequence length="438" mass="45467">MGAHHTATEQSARLFADACAVIPGGVNSPVRAFNAVGGTPRFITSANGYWLTDADDNRYVDLVCSWGPMILGHAHPAVVEAVQRVAADGLSFGAPTPSETELASEIISRVAPVERLRMVNSGTEATMSAIRLARGFTGRPKIVKFSGCYHGHSDALLADAGSGVATLGLPSSPGVTGAATADTIVLPYNDVDAVDEIFEQVGDQIAAVITEASPGNMGAVPPEPGFNAALRRITEEHGALLILDEVMTGFRVSRSGWYGLDPVDGDLFTFGKVMSGGLPAAAFGGRAEVMERLAPLGPVYQAGTLSGNPVAMAAGLATLRTADDAVYAALDKNADRLAGLLTDALTDAGVTHRVQRGGNMLSVFFTAEPVGDFATARASETWRFPPFFHALLDAGVYPPPSAFEAWFVSAALDDEAFDRIAAALPGAARAAAEASRPA</sequence>
<organism>
    <name type="scientific">Mycobacterium sp. (strain JLS)</name>
    <dbReference type="NCBI Taxonomy" id="164757"/>
    <lineage>
        <taxon>Bacteria</taxon>
        <taxon>Bacillati</taxon>
        <taxon>Actinomycetota</taxon>
        <taxon>Actinomycetes</taxon>
        <taxon>Mycobacteriales</taxon>
        <taxon>Mycobacteriaceae</taxon>
        <taxon>Mycobacterium</taxon>
    </lineage>
</organism>
<accession>A3PUB7</accession>
<name>GSA_MYCSJ</name>
<reference key="1">
    <citation type="submission" date="2007-02" db="EMBL/GenBank/DDBJ databases">
        <title>Complete sequence of Mycobacterium sp. JLS.</title>
        <authorList>
            <consortium name="US DOE Joint Genome Institute"/>
            <person name="Copeland A."/>
            <person name="Lucas S."/>
            <person name="Lapidus A."/>
            <person name="Barry K."/>
            <person name="Detter J.C."/>
            <person name="Glavina del Rio T."/>
            <person name="Hammon N."/>
            <person name="Israni S."/>
            <person name="Dalin E."/>
            <person name="Tice H."/>
            <person name="Pitluck S."/>
            <person name="Chain P."/>
            <person name="Malfatti S."/>
            <person name="Shin M."/>
            <person name="Vergez L."/>
            <person name="Schmutz J."/>
            <person name="Larimer F."/>
            <person name="Land M."/>
            <person name="Hauser L."/>
            <person name="Kyrpides N."/>
            <person name="Mikhailova N."/>
            <person name="Miller C.D."/>
            <person name="Anderson A.J."/>
            <person name="Sims R.C."/>
            <person name="Richardson P."/>
        </authorList>
    </citation>
    <scope>NUCLEOTIDE SEQUENCE [LARGE SCALE GENOMIC DNA]</scope>
    <source>
        <strain>JLS</strain>
    </source>
</reference>
<evidence type="ECO:0000255" key="1">
    <source>
        <dbReference type="HAMAP-Rule" id="MF_00375"/>
    </source>
</evidence>
<dbReference type="EC" id="5.4.3.8" evidence="1"/>
<dbReference type="EMBL" id="CP000580">
    <property type="protein sequence ID" value="ABN96494.1"/>
    <property type="molecule type" value="Genomic_DNA"/>
</dbReference>
<dbReference type="SMR" id="A3PUB7"/>
<dbReference type="KEGG" id="mjl:Mjls_0683"/>
<dbReference type="HOGENOM" id="CLU_016922_1_5_11"/>
<dbReference type="BioCyc" id="MSP164757:G1G8C-690-MONOMER"/>
<dbReference type="UniPathway" id="UPA00251">
    <property type="reaction ID" value="UER00317"/>
</dbReference>
<dbReference type="GO" id="GO:0005737">
    <property type="term" value="C:cytoplasm"/>
    <property type="evidence" value="ECO:0007669"/>
    <property type="project" value="UniProtKB-SubCell"/>
</dbReference>
<dbReference type="GO" id="GO:0042286">
    <property type="term" value="F:glutamate-1-semialdehyde 2,1-aminomutase activity"/>
    <property type="evidence" value="ECO:0007669"/>
    <property type="project" value="UniProtKB-UniRule"/>
</dbReference>
<dbReference type="GO" id="GO:0030170">
    <property type="term" value="F:pyridoxal phosphate binding"/>
    <property type="evidence" value="ECO:0007669"/>
    <property type="project" value="InterPro"/>
</dbReference>
<dbReference type="GO" id="GO:0008483">
    <property type="term" value="F:transaminase activity"/>
    <property type="evidence" value="ECO:0007669"/>
    <property type="project" value="InterPro"/>
</dbReference>
<dbReference type="GO" id="GO:0006782">
    <property type="term" value="P:protoporphyrinogen IX biosynthetic process"/>
    <property type="evidence" value="ECO:0007669"/>
    <property type="project" value="UniProtKB-UniRule"/>
</dbReference>
<dbReference type="CDD" id="cd00610">
    <property type="entry name" value="OAT_like"/>
    <property type="match status" value="1"/>
</dbReference>
<dbReference type="FunFam" id="3.40.640.10:FF:000021">
    <property type="entry name" value="Glutamate-1-semialdehyde 2,1-aminomutase"/>
    <property type="match status" value="1"/>
</dbReference>
<dbReference type="Gene3D" id="3.90.1150.10">
    <property type="entry name" value="Aspartate Aminotransferase, domain 1"/>
    <property type="match status" value="1"/>
</dbReference>
<dbReference type="Gene3D" id="3.40.640.10">
    <property type="entry name" value="Type I PLP-dependent aspartate aminotransferase-like (Major domain)"/>
    <property type="match status" value="1"/>
</dbReference>
<dbReference type="HAMAP" id="MF_00375">
    <property type="entry name" value="HemL_aminotrans_3"/>
    <property type="match status" value="1"/>
</dbReference>
<dbReference type="InterPro" id="IPR004639">
    <property type="entry name" value="4pyrrol_synth_GluAld_NH2Trfase"/>
</dbReference>
<dbReference type="InterPro" id="IPR005814">
    <property type="entry name" value="Aminotrans_3"/>
</dbReference>
<dbReference type="InterPro" id="IPR049704">
    <property type="entry name" value="Aminotrans_3_PPA_site"/>
</dbReference>
<dbReference type="InterPro" id="IPR015424">
    <property type="entry name" value="PyrdxlP-dep_Trfase"/>
</dbReference>
<dbReference type="InterPro" id="IPR015421">
    <property type="entry name" value="PyrdxlP-dep_Trfase_major"/>
</dbReference>
<dbReference type="InterPro" id="IPR015422">
    <property type="entry name" value="PyrdxlP-dep_Trfase_small"/>
</dbReference>
<dbReference type="NCBIfam" id="TIGR00713">
    <property type="entry name" value="hemL"/>
    <property type="match status" value="1"/>
</dbReference>
<dbReference type="NCBIfam" id="NF000818">
    <property type="entry name" value="PRK00062.1"/>
    <property type="match status" value="1"/>
</dbReference>
<dbReference type="PANTHER" id="PTHR43713">
    <property type="entry name" value="GLUTAMATE-1-SEMIALDEHYDE 2,1-AMINOMUTASE"/>
    <property type="match status" value="1"/>
</dbReference>
<dbReference type="PANTHER" id="PTHR43713:SF3">
    <property type="entry name" value="GLUTAMATE-1-SEMIALDEHYDE 2,1-AMINOMUTASE 1, CHLOROPLASTIC-RELATED"/>
    <property type="match status" value="1"/>
</dbReference>
<dbReference type="Pfam" id="PF00202">
    <property type="entry name" value="Aminotran_3"/>
    <property type="match status" value="1"/>
</dbReference>
<dbReference type="SUPFAM" id="SSF53383">
    <property type="entry name" value="PLP-dependent transferases"/>
    <property type="match status" value="1"/>
</dbReference>
<dbReference type="PROSITE" id="PS00600">
    <property type="entry name" value="AA_TRANSFER_CLASS_3"/>
    <property type="match status" value="1"/>
</dbReference>
<feature type="chain" id="PRO_0000382347" description="Glutamate-1-semialdehyde 2,1-aminomutase">
    <location>
        <begin position="1"/>
        <end position="438"/>
    </location>
</feature>
<feature type="modified residue" description="N6-(pyridoxal phosphate)lysine" evidence="1">
    <location>
        <position position="272"/>
    </location>
</feature>
<comment type="catalytic activity">
    <reaction evidence="1">
        <text>(S)-4-amino-5-oxopentanoate = 5-aminolevulinate</text>
        <dbReference type="Rhea" id="RHEA:14265"/>
        <dbReference type="ChEBI" id="CHEBI:57501"/>
        <dbReference type="ChEBI" id="CHEBI:356416"/>
        <dbReference type="EC" id="5.4.3.8"/>
    </reaction>
</comment>
<comment type="cofactor">
    <cofactor evidence="1">
        <name>pyridoxal 5'-phosphate</name>
        <dbReference type="ChEBI" id="CHEBI:597326"/>
    </cofactor>
</comment>
<comment type="pathway">
    <text evidence="1">Porphyrin-containing compound metabolism; protoporphyrin-IX biosynthesis; 5-aminolevulinate from L-glutamyl-tRNA(Glu): step 2/2.</text>
</comment>
<comment type="subunit">
    <text evidence="1">Homodimer.</text>
</comment>
<comment type="subcellular location">
    <subcellularLocation>
        <location evidence="1">Cytoplasm</location>
    </subcellularLocation>
</comment>
<comment type="similarity">
    <text evidence="1">Belongs to the class-III pyridoxal-phosphate-dependent aminotransferase family. HemL subfamily.</text>
</comment>
<keyword id="KW-0963">Cytoplasm</keyword>
<keyword id="KW-0413">Isomerase</keyword>
<keyword id="KW-0627">Porphyrin biosynthesis</keyword>
<keyword id="KW-0663">Pyridoxal phosphate</keyword>
<gene>
    <name evidence="1" type="primary">hemL</name>
    <name type="ordered locus">Mjls_0683</name>
</gene>
<protein>
    <recommendedName>
        <fullName evidence="1">Glutamate-1-semialdehyde 2,1-aminomutase</fullName>
        <shortName evidence="1">GSA</shortName>
        <ecNumber evidence="1">5.4.3.8</ecNumber>
    </recommendedName>
    <alternativeName>
        <fullName evidence="1">Glutamate-1-semialdehyde aminotransferase</fullName>
        <shortName evidence="1">GSA-AT</shortName>
    </alternativeName>
</protein>